<sequence length="282" mass="29767">MGRVTERRKVIRIRDGAVSTRPDTLVAEEPLEIRLNGKPLAITMRTPGDDFALAAGFLVSEGVLGEADELQNIVYCAGATVDGSNTYNVVDVRTAPGVVLPDITLERNVYTTSSCGLCGKASLDAVRTTARWTIDDTPPVRLEPELLASLPDRLRAAQRVFDRTGGLHAAALFTEEGELVDIREDVGRHNAVDKLVGRALQSGSLPLSRTVLLVSGRASFELAQKAVMAGIPVLAAVSAPSSLAVDLAAESGLTLVGFLRGASMNVYAGEHRIALRAAAAQG</sequence>
<feature type="chain" id="PRO_0000152928" description="Sulfur carrier protein FdhD">
    <location>
        <begin position="1"/>
        <end position="282"/>
    </location>
</feature>
<feature type="active site" description="Cysteine persulfide intermediate" evidence="1">
    <location>
        <position position="115"/>
    </location>
</feature>
<comment type="function">
    <text evidence="1">Required for formate dehydrogenase (FDH) activity. Acts as a sulfur carrier protein that transfers sulfur from IscS to the molybdenum cofactor prior to its insertion into FDH.</text>
</comment>
<comment type="subcellular location">
    <subcellularLocation>
        <location evidence="1">Cytoplasm</location>
    </subcellularLocation>
</comment>
<comment type="similarity">
    <text evidence="1">Belongs to the FdhD family.</text>
</comment>
<protein>
    <recommendedName>
        <fullName evidence="1">Sulfur carrier protein FdhD</fullName>
    </recommendedName>
</protein>
<keyword id="KW-0963">Cytoplasm</keyword>
<keyword id="KW-0501">Molybdenum cofactor biosynthesis</keyword>
<keyword id="KW-1185">Reference proteome</keyword>
<name>FDHD_STRAW</name>
<dbReference type="EMBL" id="BA000030">
    <property type="protein sequence ID" value="BAC69548.1"/>
    <property type="molecule type" value="Genomic_DNA"/>
</dbReference>
<dbReference type="RefSeq" id="WP_010983276.1">
    <property type="nucleotide sequence ID" value="NZ_JZJK01000086.1"/>
</dbReference>
<dbReference type="SMR" id="Q82M23"/>
<dbReference type="GeneID" id="41538938"/>
<dbReference type="KEGG" id="sma:SAVERM_1837"/>
<dbReference type="eggNOG" id="COG1526">
    <property type="taxonomic scope" value="Bacteria"/>
</dbReference>
<dbReference type="HOGENOM" id="CLU_056887_3_0_11"/>
<dbReference type="OrthoDB" id="3197277at2"/>
<dbReference type="Proteomes" id="UP000000428">
    <property type="component" value="Chromosome"/>
</dbReference>
<dbReference type="GO" id="GO:0005737">
    <property type="term" value="C:cytoplasm"/>
    <property type="evidence" value="ECO:0007669"/>
    <property type="project" value="UniProtKB-SubCell"/>
</dbReference>
<dbReference type="GO" id="GO:0097163">
    <property type="term" value="F:sulfur carrier activity"/>
    <property type="evidence" value="ECO:0007669"/>
    <property type="project" value="UniProtKB-UniRule"/>
</dbReference>
<dbReference type="GO" id="GO:0016783">
    <property type="term" value="F:sulfurtransferase activity"/>
    <property type="evidence" value="ECO:0007669"/>
    <property type="project" value="InterPro"/>
</dbReference>
<dbReference type="GO" id="GO:0006777">
    <property type="term" value="P:Mo-molybdopterin cofactor biosynthetic process"/>
    <property type="evidence" value="ECO:0007669"/>
    <property type="project" value="UniProtKB-UniRule"/>
</dbReference>
<dbReference type="Gene3D" id="3.10.20.10">
    <property type="match status" value="1"/>
</dbReference>
<dbReference type="Gene3D" id="3.40.140.10">
    <property type="entry name" value="Cytidine Deaminase, domain 2"/>
    <property type="match status" value="1"/>
</dbReference>
<dbReference type="HAMAP" id="MF_00187">
    <property type="entry name" value="FdhD"/>
    <property type="match status" value="1"/>
</dbReference>
<dbReference type="InterPro" id="IPR016193">
    <property type="entry name" value="Cytidine_deaminase-like"/>
</dbReference>
<dbReference type="InterPro" id="IPR003786">
    <property type="entry name" value="FdhD"/>
</dbReference>
<dbReference type="NCBIfam" id="TIGR00129">
    <property type="entry name" value="fdhD_narQ"/>
    <property type="match status" value="1"/>
</dbReference>
<dbReference type="NCBIfam" id="NF001943">
    <property type="entry name" value="PRK00724.1-2"/>
    <property type="match status" value="1"/>
</dbReference>
<dbReference type="PANTHER" id="PTHR30592">
    <property type="entry name" value="FORMATE DEHYDROGENASE"/>
    <property type="match status" value="1"/>
</dbReference>
<dbReference type="PANTHER" id="PTHR30592:SF1">
    <property type="entry name" value="SULFUR CARRIER PROTEIN FDHD"/>
    <property type="match status" value="1"/>
</dbReference>
<dbReference type="Pfam" id="PF02634">
    <property type="entry name" value="FdhD-NarQ"/>
    <property type="match status" value="1"/>
</dbReference>
<dbReference type="PIRSF" id="PIRSF015626">
    <property type="entry name" value="FdhD"/>
    <property type="match status" value="1"/>
</dbReference>
<dbReference type="SUPFAM" id="SSF53927">
    <property type="entry name" value="Cytidine deaminase-like"/>
    <property type="match status" value="1"/>
</dbReference>
<gene>
    <name evidence="1" type="primary">fdhD</name>
    <name type="ordered locus">SAV_1837</name>
</gene>
<reference key="1">
    <citation type="journal article" date="2001" name="Proc. Natl. Acad. Sci. U.S.A.">
        <title>Genome sequence of an industrial microorganism Streptomyces avermitilis: deducing the ability of producing secondary metabolites.</title>
        <authorList>
            <person name="Omura S."/>
            <person name="Ikeda H."/>
            <person name="Ishikawa J."/>
            <person name="Hanamoto A."/>
            <person name="Takahashi C."/>
            <person name="Shinose M."/>
            <person name="Takahashi Y."/>
            <person name="Horikawa H."/>
            <person name="Nakazawa H."/>
            <person name="Osonoe T."/>
            <person name="Kikuchi H."/>
            <person name="Shiba T."/>
            <person name="Sakaki Y."/>
            <person name="Hattori M."/>
        </authorList>
    </citation>
    <scope>NUCLEOTIDE SEQUENCE [LARGE SCALE GENOMIC DNA]</scope>
    <source>
        <strain>ATCC 31267 / DSM 46492 / JCM 5070 / NBRC 14893 / NCIMB 12804 / NRRL 8165 / MA-4680</strain>
    </source>
</reference>
<reference key="2">
    <citation type="journal article" date="2003" name="Nat. Biotechnol.">
        <title>Complete genome sequence and comparative analysis of the industrial microorganism Streptomyces avermitilis.</title>
        <authorList>
            <person name="Ikeda H."/>
            <person name="Ishikawa J."/>
            <person name="Hanamoto A."/>
            <person name="Shinose M."/>
            <person name="Kikuchi H."/>
            <person name="Shiba T."/>
            <person name="Sakaki Y."/>
            <person name="Hattori M."/>
            <person name="Omura S."/>
        </authorList>
    </citation>
    <scope>NUCLEOTIDE SEQUENCE [LARGE SCALE GENOMIC DNA]</scope>
    <source>
        <strain>ATCC 31267 / DSM 46492 / JCM 5070 / NBRC 14893 / NCIMB 12804 / NRRL 8165 / MA-4680</strain>
    </source>
</reference>
<accession>Q82M23</accession>
<proteinExistence type="inferred from homology"/>
<evidence type="ECO:0000255" key="1">
    <source>
        <dbReference type="HAMAP-Rule" id="MF_00187"/>
    </source>
</evidence>
<organism>
    <name type="scientific">Streptomyces avermitilis (strain ATCC 31267 / DSM 46492 / JCM 5070 / NBRC 14893 / NCIMB 12804 / NRRL 8165 / MA-4680)</name>
    <dbReference type="NCBI Taxonomy" id="227882"/>
    <lineage>
        <taxon>Bacteria</taxon>
        <taxon>Bacillati</taxon>
        <taxon>Actinomycetota</taxon>
        <taxon>Actinomycetes</taxon>
        <taxon>Kitasatosporales</taxon>
        <taxon>Streptomycetaceae</taxon>
        <taxon>Streptomyces</taxon>
    </lineage>
</organism>